<sequence>MAYRTNAVAAINVGFFEIAGSDDGRPGLTLMIDSKLFSLRKQLQSLLIIDQGNIQITKASAKILVVIGDKSVIPNQVHYFSNLKDITFYNDVWASTTLTSYTNKEILIDQNRSNFIVTAISKHGDNQIPQKGFILSFPQATSLPVVNINDSVKLILEFIDKDGKLINLSNTASIVTGIPLLVQNGKNVVDNPKQDDPAHARTALGVCNDGTIVIVVVEHIYKQHVKDLKLVQVRSILRQEKEINVDKLIIPEALKILEKHLVNYTVIGLTKTELADYMLTWI</sequence>
<reference key="1">
    <citation type="journal article" date="2001" name="Science">
        <title>Mechanisms of evolution in Rickettsia conorii and R. prowazekii.</title>
        <authorList>
            <person name="Ogata H."/>
            <person name="Audic S."/>
            <person name="Renesto-Audiffren P."/>
            <person name="Fournier P.-E."/>
            <person name="Barbe V."/>
            <person name="Samson D."/>
            <person name="Roux V."/>
            <person name="Cossart P."/>
            <person name="Weissenbach J."/>
            <person name="Claverie J.-M."/>
            <person name="Raoult D."/>
        </authorList>
    </citation>
    <scope>NUCLEOTIDE SEQUENCE [LARGE SCALE GENOMIC DNA]</scope>
    <source>
        <strain>ATCC VR-613 / Malish 7</strain>
    </source>
</reference>
<feature type="chain" id="PRO_0000101449" description="Uncharacterized protein RC0079">
    <location>
        <begin position="1"/>
        <end position="282"/>
    </location>
</feature>
<accession>Q92JI8</accession>
<protein>
    <recommendedName>
        <fullName>Uncharacterized protein RC0079</fullName>
    </recommendedName>
</protein>
<name>Y079_RICCN</name>
<dbReference type="EMBL" id="AE006914">
    <property type="protein sequence ID" value="AAL02617.1"/>
    <property type="molecule type" value="Genomic_DNA"/>
</dbReference>
<dbReference type="PIR" id="G97709">
    <property type="entry name" value="G97709"/>
</dbReference>
<dbReference type="RefSeq" id="WP_010976763.1">
    <property type="nucleotide sequence ID" value="NC_003103.1"/>
</dbReference>
<dbReference type="SMR" id="Q92JI8"/>
<dbReference type="GeneID" id="31757016"/>
<dbReference type="KEGG" id="rco:RC0079"/>
<dbReference type="PATRIC" id="fig|272944.4.peg.94"/>
<dbReference type="HOGENOM" id="CLU_986536_0_0_5"/>
<dbReference type="Proteomes" id="UP000000816">
    <property type="component" value="Chromosome"/>
</dbReference>
<dbReference type="InterPro" id="IPR018711">
    <property type="entry name" value="NAGPA"/>
</dbReference>
<dbReference type="Pfam" id="PF09992">
    <property type="entry name" value="NAGPA"/>
    <property type="match status" value="1"/>
</dbReference>
<gene>
    <name type="ordered locus">RC0079</name>
</gene>
<proteinExistence type="predicted"/>
<organism>
    <name type="scientific">Rickettsia conorii (strain ATCC VR-613 / Malish 7)</name>
    <dbReference type="NCBI Taxonomy" id="272944"/>
    <lineage>
        <taxon>Bacteria</taxon>
        <taxon>Pseudomonadati</taxon>
        <taxon>Pseudomonadota</taxon>
        <taxon>Alphaproteobacteria</taxon>
        <taxon>Rickettsiales</taxon>
        <taxon>Rickettsiaceae</taxon>
        <taxon>Rickettsieae</taxon>
        <taxon>Rickettsia</taxon>
        <taxon>spotted fever group</taxon>
    </lineage>
</organism>